<reference key="1">
    <citation type="journal article" date="2006" name="Proc. Natl. Acad. Sci. U.S.A.">
        <title>Comparative genomics of the lactic acid bacteria.</title>
        <authorList>
            <person name="Makarova K.S."/>
            <person name="Slesarev A."/>
            <person name="Wolf Y.I."/>
            <person name="Sorokin A."/>
            <person name="Mirkin B."/>
            <person name="Koonin E.V."/>
            <person name="Pavlov A."/>
            <person name="Pavlova N."/>
            <person name="Karamychev V."/>
            <person name="Polouchine N."/>
            <person name="Shakhova V."/>
            <person name="Grigoriev I."/>
            <person name="Lou Y."/>
            <person name="Rohksar D."/>
            <person name="Lucas S."/>
            <person name="Huang K."/>
            <person name="Goodstein D.M."/>
            <person name="Hawkins T."/>
            <person name="Plengvidhya V."/>
            <person name="Welker D."/>
            <person name="Hughes J."/>
            <person name="Goh Y."/>
            <person name="Benson A."/>
            <person name="Baldwin K."/>
            <person name="Lee J.-H."/>
            <person name="Diaz-Muniz I."/>
            <person name="Dosti B."/>
            <person name="Smeianov V."/>
            <person name="Wechter W."/>
            <person name="Barabote R."/>
            <person name="Lorca G."/>
            <person name="Altermann E."/>
            <person name="Barrangou R."/>
            <person name="Ganesan B."/>
            <person name="Xie Y."/>
            <person name="Rawsthorne H."/>
            <person name="Tamir D."/>
            <person name="Parker C."/>
            <person name="Breidt F."/>
            <person name="Broadbent J.R."/>
            <person name="Hutkins R."/>
            <person name="O'Sullivan D."/>
            <person name="Steele J."/>
            <person name="Unlu G."/>
            <person name="Saier M.H. Jr."/>
            <person name="Klaenhammer T."/>
            <person name="Richardson P."/>
            <person name="Kozyavkin S."/>
            <person name="Weimer B.C."/>
            <person name="Mills D.A."/>
        </authorList>
    </citation>
    <scope>NUCLEOTIDE SEQUENCE [LARGE SCALE GENOMIC DNA]</scope>
    <source>
        <strain>SK11</strain>
    </source>
</reference>
<proteinExistence type="inferred from homology"/>
<sequence>MSKFQVVEHPLIQHKLSILRRKEASTKEFRELVDEIGMLMAYEVSRDLPLEDVEIETPVQKTTVKQIAGKKLAIVPILRAGIGMVDGILKLIPAARVGHIGMYRDEETLKPVEYLVKLPADIADRQIFLVDPMLATGGSAILAVDSLKKRNSKAENIKFVCLVAAPEGVKALQEAHPDIEIYTAALDEKLNEHGYIVPGLGDAGDRLFGTK</sequence>
<organism>
    <name type="scientific">Lactococcus lactis subsp. cremoris (strain SK11)</name>
    <dbReference type="NCBI Taxonomy" id="272622"/>
    <lineage>
        <taxon>Bacteria</taxon>
        <taxon>Bacillati</taxon>
        <taxon>Bacillota</taxon>
        <taxon>Bacilli</taxon>
        <taxon>Lactobacillales</taxon>
        <taxon>Streptococcaceae</taxon>
        <taxon>Lactococcus</taxon>
        <taxon>Lactococcus cremoris subsp. cremoris</taxon>
    </lineage>
</organism>
<name>UPP_LACLS</name>
<accession>Q02WM7</accession>
<dbReference type="EC" id="2.4.2.9" evidence="1"/>
<dbReference type="EMBL" id="CP000425">
    <property type="protein sequence ID" value="ABJ73645.1"/>
    <property type="molecule type" value="Genomic_DNA"/>
</dbReference>
<dbReference type="RefSeq" id="WP_011676981.1">
    <property type="nucleotide sequence ID" value="NC_008527.1"/>
</dbReference>
<dbReference type="SMR" id="Q02WM7"/>
<dbReference type="KEGG" id="llc:LACR_2185"/>
<dbReference type="HOGENOM" id="CLU_067096_2_2_9"/>
<dbReference type="UniPathway" id="UPA00574">
    <property type="reaction ID" value="UER00636"/>
</dbReference>
<dbReference type="Proteomes" id="UP000000240">
    <property type="component" value="Chromosome"/>
</dbReference>
<dbReference type="GO" id="GO:0005525">
    <property type="term" value="F:GTP binding"/>
    <property type="evidence" value="ECO:0007669"/>
    <property type="project" value="UniProtKB-KW"/>
</dbReference>
<dbReference type="GO" id="GO:0000287">
    <property type="term" value="F:magnesium ion binding"/>
    <property type="evidence" value="ECO:0007669"/>
    <property type="project" value="UniProtKB-UniRule"/>
</dbReference>
<dbReference type="GO" id="GO:0004845">
    <property type="term" value="F:uracil phosphoribosyltransferase activity"/>
    <property type="evidence" value="ECO:0007669"/>
    <property type="project" value="UniProtKB-UniRule"/>
</dbReference>
<dbReference type="GO" id="GO:0044206">
    <property type="term" value="P:UMP salvage"/>
    <property type="evidence" value="ECO:0007669"/>
    <property type="project" value="UniProtKB-UniRule"/>
</dbReference>
<dbReference type="GO" id="GO:0006223">
    <property type="term" value="P:uracil salvage"/>
    <property type="evidence" value="ECO:0007669"/>
    <property type="project" value="InterPro"/>
</dbReference>
<dbReference type="CDD" id="cd06223">
    <property type="entry name" value="PRTases_typeI"/>
    <property type="match status" value="1"/>
</dbReference>
<dbReference type="FunFam" id="3.40.50.2020:FF:000003">
    <property type="entry name" value="Uracil phosphoribosyltransferase"/>
    <property type="match status" value="1"/>
</dbReference>
<dbReference type="Gene3D" id="3.40.50.2020">
    <property type="match status" value="1"/>
</dbReference>
<dbReference type="HAMAP" id="MF_01218_B">
    <property type="entry name" value="Upp_B"/>
    <property type="match status" value="1"/>
</dbReference>
<dbReference type="InterPro" id="IPR000836">
    <property type="entry name" value="PRibTrfase_dom"/>
</dbReference>
<dbReference type="InterPro" id="IPR029057">
    <property type="entry name" value="PRTase-like"/>
</dbReference>
<dbReference type="InterPro" id="IPR034332">
    <property type="entry name" value="Upp_B"/>
</dbReference>
<dbReference type="InterPro" id="IPR050054">
    <property type="entry name" value="UPRTase/APRTase"/>
</dbReference>
<dbReference type="InterPro" id="IPR005765">
    <property type="entry name" value="Ura_phspho_trans"/>
</dbReference>
<dbReference type="NCBIfam" id="NF001097">
    <property type="entry name" value="PRK00129.1"/>
    <property type="match status" value="1"/>
</dbReference>
<dbReference type="NCBIfam" id="TIGR01091">
    <property type="entry name" value="upp"/>
    <property type="match status" value="1"/>
</dbReference>
<dbReference type="PANTHER" id="PTHR32315">
    <property type="entry name" value="ADENINE PHOSPHORIBOSYLTRANSFERASE"/>
    <property type="match status" value="1"/>
</dbReference>
<dbReference type="PANTHER" id="PTHR32315:SF4">
    <property type="entry name" value="URACIL PHOSPHORIBOSYLTRANSFERASE, CHLOROPLASTIC"/>
    <property type="match status" value="1"/>
</dbReference>
<dbReference type="Pfam" id="PF14681">
    <property type="entry name" value="UPRTase"/>
    <property type="match status" value="1"/>
</dbReference>
<dbReference type="SUPFAM" id="SSF53271">
    <property type="entry name" value="PRTase-like"/>
    <property type="match status" value="1"/>
</dbReference>
<feature type="chain" id="PRO_1000053733" description="Uracil phosphoribosyltransferase">
    <location>
        <begin position="1"/>
        <end position="211"/>
    </location>
</feature>
<feature type="binding site" evidence="1">
    <location>
        <position position="79"/>
    </location>
    <ligand>
        <name>5-phospho-alpha-D-ribose 1-diphosphate</name>
        <dbReference type="ChEBI" id="CHEBI:58017"/>
    </ligand>
</feature>
<feature type="binding site" evidence="1">
    <location>
        <position position="104"/>
    </location>
    <ligand>
        <name>5-phospho-alpha-D-ribose 1-diphosphate</name>
        <dbReference type="ChEBI" id="CHEBI:58017"/>
    </ligand>
</feature>
<feature type="binding site" evidence="1">
    <location>
        <begin position="131"/>
        <end position="139"/>
    </location>
    <ligand>
        <name>5-phospho-alpha-D-ribose 1-diphosphate</name>
        <dbReference type="ChEBI" id="CHEBI:58017"/>
    </ligand>
</feature>
<feature type="binding site" evidence="1">
    <location>
        <position position="196"/>
    </location>
    <ligand>
        <name>uracil</name>
        <dbReference type="ChEBI" id="CHEBI:17568"/>
    </ligand>
</feature>
<feature type="binding site" evidence="1">
    <location>
        <begin position="201"/>
        <end position="203"/>
    </location>
    <ligand>
        <name>uracil</name>
        <dbReference type="ChEBI" id="CHEBI:17568"/>
    </ligand>
</feature>
<feature type="binding site" evidence="1">
    <location>
        <position position="202"/>
    </location>
    <ligand>
        <name>5-phospho-alpha-D-ribose 1-diphosphate</name>
        <dbReference type="ChEBI" id="CHEBI:58017"/>
    </ligand>
</feature>
<evidence type="ECO:0000255" key="1">
    <source>
        <dbReference type="HAMAP-Rule" id="MF_01218"/>
    </source>
</evidence>
<keyword id="KW-0021">Allosteric enzyme</keyword>
<keyword id="KW-0328">Glycosyltransferase</keyword>
<keyword id="KW-0342">GTP-binding</keyword>
<keyword id="KW-0460">Magnesium</keyword>
<keyword id="KW-0547">Nucleotide-binding</keyword>
<keyword id="KW-0808">Transferase</keyword>
<gene>
    <name evidence="1" type="primary">upp</name>
    <name type="ordered locus">LACR_2185</name>
</gene>
<protein>
    <recommendedName>
        <fullName evidence="1">Uracil phosphoribosyltransferase</fullName>
        <ecNumber evidence="1">2.4.2.9</ecNumber>
    </recommendedName>
    <alternativeName>
        <fullName evidence="1">UMP pyrophosphorylase</fullName>
    </alternativeName>
    <alternativeName>
        <fullName evidence="1">UPRTase</fullName>
    </alternativeName>
</protein>
<comment type="function">
    <text evidence="1">Catalyzes the conversion of uracil and 5-phospho-alpha-D-ribose 1-diphosphate (PRPP) to UMP and diphosphate.</text>
</comment>
<comment type="catalytic activity">
    <reaction evidence="1">
        <text>UMP + diphosphate = 5-phospho-alpha-D-ribose 1-diphosphate + uracil</text>
        <dbReference type="Rhea" id="RHEA:13017"/>
        <dbReference type="ChEBI" id="CHEBI:17568"/>
        <dbReference type="ChEBI" id="CHEBI:33019"/>
        <dbReference type="ChEBI" id="CHEBI:57865"/>
        <dbReference type="ChEBI" id="CHEBI:58017"/>
        <dbReference type="EC" id="2.4.2.9"/>
    </reaction>
</comment>
<comment type="cofactor">
    <cofactor evidence="1">
        <name>Mg(2+)</name>
        <dbReference type="ChEBI" id="CHEBI:18420"/>
    </cofactor>
    <text evidence="1">Binds 1 Mg(2+) ion per subunit. The magnesium is bound as Mg-PRPP.</text>
</comment>
<comment type="activity regulation">
    <text evidence="1">Allosterically activated by GTP.</text>
</comment>
<comment type="pathway">
    <text evidence="1">Pyrimidine metabolism; UMP biosynthesis via salvage pathway; UMP from uracil: step 1/1.</text>
</comment>
<comment type="similarity">
    <text evidence="1">Belongs to the UPRTase family.</text>
</comment>